<organism>
    <name type="scientific">Ruegeria sp. (strain TM1040)</name>
    <name type="common">Silicibacter sp.</name>
    <dbReference type="NCBI Taxonomy" id="292414"/>
    <lineage>
        <taxon>Bacteria</taxon>
        <taxon>Pseudomonadati</taxon>
        <taxon>Pseudomonadota</taxon>
        <taxon>Alphaproteobacteria</taxon>
        <taxon>Rhodobacterales</taxon>
        <taxon>Roseobacteraceae</taxon>
        <taxon>Ruegeria</taxon>
    </lineage>
</organism>
<dbReference type="EMBL" id="CP000377">
    <property type="protein sequence ID" value="ABF62989.1"/>
    <property type="molecule type" value="Genomic_DNA"/>
</dbReference>
<dbReference type="RefSeq" id="WP_005621901.1">
    <property type="nucleotide sequence ID" value="NC_008044.1"/>
</dbReference>
<dbReference type="SMR" id="Q1GK27"/>
<dbReference type="STRING" id="292414.TM1040_0256"/>
<dbReference type="GeneID" id="28248366"/>
<dbReference type="KEGG" id="sit:TM1040_0256"/>
<dbReference type="eggNOG" id="COG0197">
    <property type="taxonomic scope" value="Bacteria"/>
</dbReference>
<dbReference type="HOGENOM" id="CLU_078858_2_1_5"/>
<dbReference type="OrthoDB" id="9802589at2"/>
<dbReference type="Proteomes" id="UP000000636">
    <property type="component" value="Chromosome"/>
</dbReference>
<dbReference type="GO" id="GO:0022625">
    <property type="term" value="C:cytosolic large ribosomal subunit"/>
    <property type="evidence" value="ECO:0007669"/>
    <property type="project" value="TreeGrafter"/>
</dbReference>
<dbReference type="GO" id="GO:0019843">
    <property type="term" value="F:rRNA binding"/>
    <property type="evidence" value="ECO:0007669"/>
    <property type="project" value="UniProtKB-UniRule"/>
</dbReference>
<dbReference type="GO" id="GO:0003735">
    <property type="term" value="F:structural constituent of ribosome"/>
    <property type="evidence" value="ECO:0007669"/>
    <property type="project" value="InterPro"/>
</dbReference>
<dbReference type="GO" id="GO:0000049">
    <property type="term" value="F:tRNA binding"/>
    <property type="evidence" value="ECO:0007669"/>
    <property type="project" value="UniProtKB-KW"/>
</dbReference>
<dbReference type="GO" id="GO:0006412">
    <property type="term" value="P:translation"/>
    <property type="evidence" value="ECO:0007669"/>
    <property type="project" value="UniProtKB-UniRule"/>
</dbReference>
<dbReference type="CDD" id="cd01433">
    <property type="entry name" value="Ribosomal_L16_L10e"/>
    <property type="match status" value="1"/>
</dbReference>
<dbReference type="FunFam" id="3.90.1170.10:FF:000001">
    <property type="entry name" value="50S ribosomal protein L16"/>
    <property type="match status" value="1"/>
</dbReference>
<dbReference type="Gene3D" id="3.90.1170.10">
    <property type="entry name" value="Ribosomal protein L10e/L16"/>
    <property type="match status" value="1"/>
</dbReference>
<dbReference type="HAMAP" id="MF_01342">
    <property type="entry name" value="Ribosomal_uL16"/>
    <property type="match status" value="1"/>
</dbReference>
<dbReference type="InterPro" id="IPR047873">
    <property type="entry name" value="Ribosomal_uL16"/>
</dbReference>
<dbReference type="InterPro" id="IPR000114">
    <property type="entry name" value="Ribosomal_uL16_bact-type"/>
</dbReference>
<dbReference type="InterPro" id="IPR020798">
    <property type="entry name" value="Ribosomal_uL16_CS"/>
</dbReference>
<dbReference type="InterPro" id="IPR016180">
    <property type="entry name" value="Ribosomal_uL16_dom"/>
</dbReference>
<dbReference type="InterPro" id="IPR036920">
    <property type="entry name" value="Ribosomal_uL16_sf"/>
</dbReference>
<dbReference type="NCBIfam" id="TIGR01164">
    <property type="entry name" value="rplP_bact"/>
    <property type="match status" value="1"/>
</dbReference>
<dbReference type="PANTHER" id="PTHR12220">
    <property type="entry name" value="50S/60S RIBOSOMAL PROTEIN L16"/>
    <property type="match status" value="1"/>
</dbReference>
<dbReference type="PANTHER" id="PTHR12220:SF13">
    <property type="entry name" value="LARGE RIBOSOMAL SUBUNIT PROTEIN UL16M"/>
    <property type="match status" value="1"/>
</dbReference>
<dbReference type="Pfam" id="PF00252">
    <property type="entry name" value="Ribosomal_L16"/>
    <property type="match status" value="1"/>
</dbReference>
<dbReference type="PRINTS" id="PR00060">
    <property type="entry name" value="RIBOSOMALL16"/>
</dbReference>
<dbReference type="SUPFAM" id="SSF54686">
    <property type="entry name" value="Ribosomal protein L16p/L10e"/>
    <property type="match status" value="1"/>
</dbReference>
<dbReference type="PROSITE" id="PS00586">
    <property type="entry name" value="RIBOSOMAL_L16_1"/>
    <property type="match status" value="1"/>
</dbReference>
<dbReference type="PROSITE" id="PS00701">
    <property type="entry name" value="RIBOSOMAL_L16_2"/>
    <property type="match status" value="1"/>
</dbReference>
<sequence length="137" mass="15646">MLQPKRTKFRKMHKGRIKGLAKGGSDLNFGTYGLKAVTPERVTARQIEAARRAMTRHMKRQGRVWIRIFPDTPVTSKPVEVRMGKGKGSVDFWACKVKPGRVMFEIDGVNEDIAREALRLAAMKLPVQTRIVVREDW</sequence>
<reference key="1">
    <citation type="submission" date="2006-05" db="EMBL/GenBank/DDBJ databases">
        <title>Complete sequence of chromosome of Silicibacter sp. TM1040.</title>
        <authorList>
            <consortium name="US DOE Joint Genome Institute"/>
            <person name="Copeland A."/>
            <person name="Lucas S."/>
            <person name="Lapidus A."/>
            <person name="Barry K."/>
            <person name="Detter J.C."/>
            <person name="Glavina del Rio T."/>
            <person name="Hammon N."/>
            <person name="Israni S."/>
            <person name="Dalin E."/>
            <person name="Tice H."/>
            <person name="Pitluck S."/>
            <person name="Brettin T."/>
            <person name="Bruce D."/>
            <person name="Han C."/>
            <person name="Tapia R."/>
            <person name="Goodwin L."/>
            <person name="Thompson L.S."/>
            <person name="Gilna P."/>
            <person name="Schmutz J."/>
            <person name="Larimer F."/>
            <person name="Land M."/>
            <person name="Hauser L."/>
            <person name="Kyrpides N."/>
            <person name="Kim E."/>
            <person name="Belas R."/>
            <person name="Moran M.A."/>
            <person name="Buchan A."/>
            <person name="Gonzalez J.M."/>
            <person name="Schell M.A."/>
            <person name="Sun F."/>
            <person name="Richardson P."/>
        </authorList>
    </citation>
    <scope>NUCLEOTIDE SEQUENCE [LARGE SCALE GENOMIC DNA]</scope>
    <source>
        <strain>TM1040</strain>
    </source>
</reference>
<gene>
    <name evidence="1" type="primary">rplP</name>
    <name type="ordered locus">TM1040_0256</name>
</gene>
<comment type="function">
    <text evidence="1">Binds 23S rRNA and is also seen to make contacts with the A and possibly P site tRNAs.</text>
</comment>
<comment type="subunit">
    <text evidence="1">Part of the 50S ribosomal subunit.</text>
</comment>
<comment type="similarity">
    <text evidence="1">Belongs to the universal ribosomal protein uL16 family.</text>
</comment>
<protein>
    <recommendedName>
        <fullName evidence="1">Large ribosomal subunit protein uL16</fullName>
    </recommendedName>
    <alternativeName>
        <fullName evidence="2">50S ribosomal protein L16</fullName>
    </alternativeName>
</protein>
<keyword id="KW-1185">Reference proteome</keyword>
<keyword id="KW-0687">Ribonucleoprotein</keyword>
<keyword id="KW-0689">Ribosomal protein</keyword>
<keyword id="KW-0694">RNA-binding</keyword>
<keyword id="KW-0699">rRNA-binding</keyword>
<keyword id="KW-0820">tRNA-binding</keyword>
<evidence type="ECO:0000255" key="1">
    <source>
        <dbReference type="HAMAP-Rule" id="MF_01342"/>
    </source>
</evidence>
<evidence type="ECO:0000305" key="2"/>
<proteinExistence type="inferred from homology"/>
<feature type="chain" id="PRO_0000251671" description="Large ribosomal subunit protein uL16">
    <location>
        <begin position="1"/>
        <end position="137"/>
    </location>
</feature>
<accession>Q1GK27</accession>
<name>RL16_RUEST</name>